<comment type="function">
    <text evidence="3 4">Specific citrate synthase with catalytic activity only with acetyl-CoA.</text>
</comment>
<comment type="catalytic activity">
    <reaction evidence="3 4">
        <text>oxaloacetate + acetyl-CoA + H2O = citrate + CoA + H(+)</text>
        <dbReference type="Rhea" id="RHEA:16845"/>
        <dbReference type="ChEBI" id="CHEBI:15377"/>
        <dbReference type="ChEBI" id="CHEBI:15378"/>
        <dbReference type="ChEBI" id="CHEBI:16452"/>
        <dbReference type="ChEBI" id="CHEBI:16947"/>
        <dbReference type="ChEBI" id="CHEBI:57287"/>
        <dbReference type="ChEBI" id="CHEBI:57288"/>
        <dbReference type="EC" id="2.3.3.1"/>
    </reaction>
</comment>
<comment type="activity regulation">
    <text evidence="4">Phosphorylation at Ser-462 inhibits catalytic activity. Dephosphorylation at Ser-462 by PTC7 enhances catalytic activity.</text>
</comment>
<comment type="biophysicochemical properties">
    <kinetics>
        <KM evidence="3">76 uM for acetyl-CoA</KM>
        <KM evidence="4">9.86 uM for oxaloacetate</KM>
        <Vmax evidence="4">1.92 uM/sec/ug enzyme</Vmax>
    </kinetics>
</comment>
<comment type="pathway">
    <text evidence="6">Carbohydrate metabolism; tricarboxylic acid cycle; isocitrate from oxaloacetate: step 1/2.</text>
</comment>
<comment type="subunit">
    <text evidence="4">Monomer and homodimer (PubMed:28076776). Exists as an inactive monomer when phosphorylated (PubMed:28076776). Homodimerization is dependent on dephosphorylation of Ser-462 by PTC7 and is required for activity (PubMed:28076776).</text>
</comment>
<comment type="subcellular location">
    <subcellularLocation>
        <location evidence="2">Mitochondrion matrix</location>
    </subcellularLocation>
</comment>
<comment type="PTM">
    <text evidence="4">Phosphorylation at Ser-462. Dephosphorylated at Ser-462 by PTC7.</text>
</comment>
<comment type="disruption phenotype">
    <text evidence="4">Decreased growth related to mitochondrial dysfunction.</text>
</comment>
<comment type="miscellaneous">
    <text evidence="6">Citrate synthase is found in nearly all cells capable of oxidative metabolism.</text>
</comment>
<comment type="similarity">
    <text evidence="6">Belongs to the citrate synthase family.</text>
</comment>
<evidence type="ECO:0000255" key="1">
    <source>
        <dbReference type="PROSITE-ProRule" id="PRU10117"/>
    </source>
</evidence>
<evidence type="ECO:0000269" key="2">
    <source>
    </source>
</evidence>
<evidence type="ECO:0000269" key="3">
    <source>
    </source>
</evidence>
<evidence type="ECO:0000269" key="4">
    <source>
    </source>
</evidence>
<evidence type="ECO:0000303" key="5">
    <source>
    </source>
</evidence>
<evidence type="ECO:0000305" key="6"/>
<evidence type="ECO:0007829" key="7">
    <source>
        <dbReference type="PDB" id="8GQZ"/>
    </source>
</evidence>
<accession>P00890</accession>
<accession>D6W1H7</accession>
<sequence length="479" mass="53360">MSAILSTTSKSFLSRGSTRQCQNMQKALFALLNARHYSSASEQTLKERFAEIIPAKAEEIKKFKKEHGKTVIGEVLLEQAYGGMRGIKGLVWEGSVLDPEEGIRFRGRTIPEIQRELPKAEGSTEPLPEALFWLLLTGEIPTDAQVKALSADLAARSEIPEHVIQLLDSLPKDLHPMAQFSIAVTALESESKFAKAYAQGVSKKEYWSYTFEDSLDLLGKLPVIASKIYRNVFKDGKITSTDPNADYGKNLAQLLGYENKDFIDLMRLYLTIHSDHEGGNVSAHTTHLVGSALSSPYLSLAAGLNGLAGPLHGRANQEVLEWLFKLREEVKGDYSKETIEKYLWDTLNAGRVVPGYGHAVLRKTDPRYTAQREFALKHFPDYELFKLVSTIYEVAPGVLTKHGKTKNPWPNVDSHSGVLLQYYGLTEASFYTVLFGVARAIGVLPQLIIDRAVGAPIERPKSFSTEKYKELVKKIESKN</sequence>
<organism>
    <name type="scientific">Saccharomyces cerevisiae (strain ATCC 204508 / S288c)</name>
    <name type="common">Baker's yeast</name>
    <dbReference type="NCBI Taxonomy" id="559292"/>
    <lineage>
        <taxon>Eukaryota</taxon>
        <taxon>Fungi</taxon>
        <taxon>Dikarya</taxon>
        <taxon>Ascomycota</taxon>
        <taxon>Saccharomycotina</taxon>
        <taxon>Saccharomycetes</taxon>
        <taxon>Saccharomycetales</taxon>
        <taxon>Saccharomycetaceae</taxon>
        <taxon>Saccharomyces</taxon>
    </lineage>
</organism>
<reference key="1">
    <citation type="journal article" date="1984" name="EMBO J.">
        <title>Isolation of the nuclear yeast genes for citrate synthase and fifteen other mitochondrial proteins by a new screening method.</title>
        <authorList>
            <person name="Suissa M."/>
            <person name="Suda K."/>
            <person name="Schatz G."/>
        </authorList>
    </citation>
    <scope>NUCLEOTIDE SEQUENCE [GENOMIC DNA]</scope>
    <source>
        <strain>ATCC 24657 / D273-10B</strain>
    </source>
</reference>
<reference key="2">
    <citation type="submission" date="1993-07" db="EMBL/GenBank/DDBJ databases">
        <title>The effect of point mutations in the hinge of yeast citrate synthase.</title>
        <authorList>
            <person name="Lindner P."/>
            <person name="Plueckthun A."/>
        </authorList>
    </citation>
    <scope>NUCLEOTIDE SEQUENCE [GENOMIC DNA]</scope>
    <scope>PARTIAL PROTEIN SEQUENCE</scope>
    <source>
        <strain>ATCC 24657 / D273-10B</strain>
    </source>
</reference>
<reference key="3">
    <citation type="journal article" date="1994" name="Yeast">
        <title>Organization of the centromeric region of chromosome XIV in Saccharomyces cerevisiae.</title>
        <authorList>
            <person name="Lalo D."/>
            <person name="Stettler S."/>
            <person name="Mariotte S."/>
            <person name="Gendreau E."/>
            <person name="Thuriaux P."/>
        </authorList>
    </citation>
    <scope>NUCLEOTIDE SEQUENCE [GENOMIC DNA]</scope>
    <source>
        <strain>S288c / GRF88</strain>
    </source>
</reference>
<reference key="4">
    <citation type="journal article" date="1994" name="Yeast">
        <title>Twelve open reading frames revealed in the 23.6 kb segment flanking the centromere on the Saccharomyces cerevisiae chromosome XIV right arm.</title>
        <authorList>
            <person name="Verhasselt P."/>
            <person name="Aert R."/>
            <person name="Voet M."/>
            <person name="Volckaert G."/>
        </authorList>
    </citation>
    <scope>NUCLEOTIDE SEQUENCE [GENOMIC DNA]</scope>
    <source>
        <strain>ATCC 96604 / S288c / FY1679</strain>
    </source>
</reference>
<reference key="5">
    <citation type="journal article" date="1997" name="Nature">
        <title>The nucleotide sequence of Saccharomyces cerevisiae chromosome XIV and its evolutionary implications.</title>
        <authorList>
            <person name="Philippsen P."/>
            <person name="Kleine K."/>
            <person name="Poehlmann R."/>
            <person name="Duesterhoeft A."/>
            <person name="Hamberg K."/>
            <person name="Hegemann J.H."/>
            <person name="Obermaier B."/>
            <person name="Urrestarazu L.A."/>
            <person name="Aert R."/>
            <person name="Albermann K."/>
            <person name="Altmann R."/>
            <person name="Andre B."/>
            <person name="Baladron V."/>
            <person name="Ballesta J.P.G."/>
            <person name="Becam A.-M."/>
            <person name="Beinhauer J.D."/>
            <person name="Boskovic J."/>
            <person name="Buitrago M.J."/>
            <person name="Bussereau F."/>
            <person name="Coster F."/>
            <person name="Crouzet M."/>
            <person name="D'Angelo M."/>
            <person name="Dal Pero F."/>
            <person name="De Antoni A."/>
            <person name="del Rey F."/>
            <person name="Doignon F."/>
            <person name="Domdey H."/>
            <person name="Dubois E."/>
            <person name="Fiedler T.A."/>
            <person name="Fleig U."/>
            <person name="Floeth M."/>
            <person name="Fritz C."/>
            <person name="Gaillardin C."/>
            <person name="Garcia-Cantalejo J.M."/>
            <person name="Glansdorff N."/>
            <person name="Goffeau A."/>
            <person name="Gueldener U."/>
            <person name="Herbert C.J."/>
            <person name="Heumann K."/>
            <person name="Heuss-Neitzel D."/>
            <person name="Hilbert H."/>
            <person name="Hinni K."/>
            <person name="Iraqui Houssaini I."/>
            <person name="Jacquet M."/>
            <person name="Jimenez A."/>
            <person name="Jonniaux J.-L."/>
            <person name="Karpfinger-Hartl L."/>
            <person name="Lanfranchi G."/>
            <person name="Lepingle A."/>
            <person name="Levesque H."/>
            <person name="Lyck R."/>
            <person name="Maftahi M."/>
            <person name="Mallet L."/>
            <person name="Maurer C.T.C."/>
            <person name="Messenguy F."/>
            <person name="Mewes H.-W."/>
            <person name="Moestl D."/>
            <person name="Nasr F."/>
            <person name="Nicaud J.-M."/>
            <person name="Niedenthal R.K."/>
            <person name="Pandolfo D."/>
            <person name="Pierard A."/>
            <person name="Piravandi E."/>
            <person name="Planta R.J."/>
            <person name="Pohl T.M."/>
            <person name="Purnelle B."/>
            <person name="Rebischung C."/>
            <person name="Remacha M.A."/>
            <person name="Revuelta J.L."/>
            <person name="Rinke M."/>
            <person name="Saiz J.E."/>
            <person name="Sartorello F."/>
            <person name="Scherens B."/>
            <person name="Sen-Gupta M."/>
            <person name="Soler-Mira A."/>
            <person name="Urbanus J.H.M."/>
            <person name="Valle G."/>
            <person name="Van Dyck L."/>
            <person name="Verhasselt P."/>
            <person name="Vierendeels F."/>
            <person name="Vissers S."/>
            <person name="Voet M."/>
            <person name="Volckaert G."/>
            <person name="Wach A."/>
            <person name="Wambutt R."/>
            <person name="Wedler H."/>
            <person name="Zollner A."/>
            <person name="Hani J."/>
        </authorList>
    </citation>
    <scope>NUCLEOTIDE SEQUENCE [LARGE SCALE GENOMIC DNA]</scope>
    <source>
        <strain>ATCC 204508 / S288c</strain>
    </source>
</reference>
<reference key="6">
    <citation type="journal article" date="2014" name="G3 (Bethesda)">
        <title>The reference genome sequence of Saccharomyces cerevisiae: Then and now.</title>
        <authorList>
            <person name="Engel S.R."/>
            <person name="Dietrich F.S."/>
            <person name="Fisk D.G."/>
            <person name="Binkley G."/>
            <person name="Balakrishnan R."/>
            <person name="Costanzo M.C."/>
            <person name="Dwight S.S."/>
            <person name="Hitz B.C."/>
            <person name="Karra K."/>
            <person name="Nash R.S."/>
            <person name="Weng S."/>
            <person name="Wong E.D."/>
            <person name="Lloyd P."/>
            <person name="Skrzypek M.S."/>
            <person name="Miyasato S.R."/>
            <person name="Simison M."/>
            <person name="Cherry J.M."/>
        </authorList>
    </citation>
    <scope>GENOME REANNOTATION</scope>
    <source>
        <strain>ATCC 204508 / S288c</strain>
    </source>
</reference>
<reference key="7">
    <citation type="journal article" date="2001" name="Biochemistry">
        <title>Yeast mitochondrial dehydrogenases are associated in a supramolecular complex.</title>
        <authorList>
            <person name="Grandier-Vazeille X."/>
            <person name="Bathany K."/>
            <person name="Chaignepain S."/>
            <person name="Camougrand N."/>
            <person name="Manon S."/>
            <person name="Schmitter J.-M."/>
        </authorList>
    </citation>
    <scope>SUBCELLULAR LOCATION</scope>
</reference>
<reference key="8">
    <citation type="journal article" date="2007" name="Arch. Biochem. Biophys.">
        <title>Functional comparison of citrate synthase isoforms from S. cerevisiae.</title>
        <authorList>
            <person name="Graybill E.R."/>
            <person name="Rouhier M.F."/>
            <person name="Kirby C.E."/>
            <person name="Hawes J.W."/>
        </authorList>
    </citation>
    <scope>FUNCTION</scope>
    <scope>CATALYTIC ACTIVITY</scope>
    <scope>BIOPHYSICOCHEMICAL PROPERTIES</scope>
</reference>
<reference key="9">
    <citation type="journal article" date="2012" name="Proc. Natl. Acad. Sci. U.S.A.">
        <title>N-terminal acetylome analyses and functional insights of the N-terminal acetyltransferase NatB.</title>
        <authorList>
            <person name="Van Damme P."/>
            <person name="Lasa M."/>
            <person name="Polevoda B."/>
            <person name="Gazquez C."/>
            <person name="Elosegui-Artola A."/>
            <person name="Kim D.S."/>
            <person name="De Juan-Pardo E."/>
            <person name="Demeyer K."/>
            <person name="Hole K."/>
            <person name="Larrea E."/>
            <person name="Timmerman E."/>
            <person name="Prieto J."/>
            <person name="Arnesen T."/>
            <person name="Sherman F."/>
            <person name="Gevaert K."/>
            <person name="Aldabe R."/>
        </authorList>
    </citation>
    <scope>IDENTIFICATION BY MASS SPECTROMETRY [LARGE SCALE ANALYSIS]</scope>
</reference>
<reference key="10">
    <citation type="journal article" date="2017" name="Cell Rep.">
        <title>Ptc7p Dephosphorylates Select Mitochondrial Proteins to Enhance Metabolic Function.</title>
        <authorList>
            <person name="Guo X."/>
            <person name="Niemi N.M."/>
            <person name="Hutchins P.D."/>
            <person name="Condon S.G.F."/>
            <person name="Jochem A."/>
            <person name="Ulbrich A."/>
            <person name="Higbee A.J."/>
            <person name="Russell J.D."/>
            <person name="Senes A."/>
            <person name="Coon J.J."/>
            <person name="Pagliarini D.J."/>
        </authorList>
    </citation>
    <scope>IDENTIFICATION BY MASS SPECTROMETRY</scope>
    <scope>FUNCTION</scope>
    <scope>CATALYTIC ACTIVITY</scope>
    <scope>ACTIVITY REGULATION</scope>
    <scope>BIOPHYSICOCHEMICAL PROPERTIES</scope>
    <scope>SUBUNIT</scope>
    <scope>PHOSPHORYLATION AT SER-462</scope>
    <scope>DEPHOSPHORYLATION</scope>
    <scope>DISRUPTION PHENOTYPE</scope>
    <scope>MUTAGENESIS OF SER-462</scope>
</reference>
<name>CISY1_YEAST</name>
<protein>
    <recommendedName>
        <fullName evidence="5">Citrate synthase, mitochondrial</fullName>
        <ecNumber evidence="3 4">2.3.3.1</ecNumber>
    </recommendedName>
</protein>
<gene>
    <name evidence="5" type="primary">CIT1</name>
    <name type="synonym">GLU3</name>
    <name type="synonym">LYS6</name>
    <name type="ordered locus">YNR001C</name>
    <name type="ORF">N2019</name>
</gene>
<keyword id="KW-0002">3D-structure</keyword>
<keyword id="KW-0903">Direct protein sequencing</keyword>
<keyword id="KW-0496">Mitochondrion</keyword>
<keyword id="KW-0597">Phosphoprotein</keyword>
<keyword id="KW-1185">Reference proteome</keyword>
<keyword id="KW-0808">Transferase</keyword>
<keyword id="KW-0809">Transit peptide</keyword>
<keyword id="KW-0816">Tricarboxylic acid cycle</keyword>
<dbReference type="EC" id="2.3.3.1" evidence="3 4"/>
<dbReference type="EMBL" id="X00782">
    <property type="protein sequence ID" value="CAA25359.1"/>
    <property type="molecule type" value="Genomic_DNA"/>
</dbReference>
<dbReference type="EMBL" id="Z23259">
    <property type="protein sequence ID" value="CAA80781.1"/>
    <property type="molecule type" value="Genomic_DNA"/>
</dbReference>
<dbReference type="EMBL" id="X77395">
    <property type="protein sequence ID" value="CAA54569.1"/>
    <property type="molecule type" value="Genomic_DNA"/>
</dbReference>
<dbReference type="EMBL" id="Z71616">
    <property type="protein sequence ID" value="CAA96277.1"/>
    <property type="molecule type" value="Genomic_DNA"/>
</dbReference>
<dbReference type="EMBL" id="BK006947">
    <property type="protein sequence ID" value="DAA10543.1"/>
    <property type="molecule type" value="Genomic_DNA"/>
</dbReference>
<dbReference type="PIR" id="S35390">
    <property type="entry name" value="YKBY"/>
</dbReference>
<dbReference type="RefSeq" id="NP_014398.1">
    <property type="nucleotide sequence ID" value="NM_001183178.1"/>
</dbReference>
<dbReference type="PDB" id="8GQZ">
    <property type="method" value="X-ray"/>
    <property type="resolution" value="1.42 A"/>
    <property type="chains" value="A/B=1-479"/>
</dbReference>
<dbReference type="PDBsum" id="8GQZ"/>
<dbReference type="SMR" id="P00890"/>
<dbReference type="BioGRID" id="35825">
    <property type="interactions" value="174"/>
</dbReference>
<dbReference type="DIP" id="DIP-4597N"/>
<dbReference type="FunCoup" id="P00890">
    <property type="interactions" value="1237"/>
</dbReference>
<dbReference type="IntAct" id="P00890">
    <property type="interactions" value="35"/>
</dbReference>
<dbReference type="STRING" id="4932.YNR001C"/>
<dbReference type="iPTMnet" id="P00890"/>
<dbReference type="PaxDb" id="4932-YNR001C"/>
<dbReference type="PeptideAtlas" id="P00890"/>
<dbReference type="TopDownProteomics" id="P00890"/>
<dbReference type="EnsemblFungi" id="YNR001C_mRNA">
    <property type="protein sequence ID" value="YNR001C"/>
    <property type="gene ID" value="YNR001C"/>
</dbReference>
<dbReference type="GeneID" id="855732"/>
<dbReference type="KEGG" id="sce:YNR001C"/>
<dbReference type="AGR" id="SGD:S000005284"/>
<dbReference type="SGD" id="S000005284">
    <property type="gene designation" value="CIT1"/>
</dbReference>
<dbReference type="VEuPathDB" id="FungiDB:YNR001C"/>
<dbReference type="eggNOG" id="KOG2617">
    <property type="taxonomic scope" value="Eukaryota"/>
</dbReference>
<dbReference type="GeneTree" id="ENSGT00390000006813"/>
<dbReference type="HOGENOM" id="CLU_022049_2_1_1"/>
<dbReference type="InParanoid" id="P00890"/>
<dbReference type="OMA" id="VLEWLFK"/>
<dbReference type="OrthoDB" id="8017587at2759"/>
<dbReference type="BioCyc" id="YEAST:YNR001C-MONOMER"/>
<dbReference type="BRENDA" id="2.3.3.16">
    <property type="organism ID" value="984"/>
</dbReference>
<dbReference type="Reactome" id="R-SCE-71403">
    <property type="pathway name" value="Citric acid cycle (TCA cycle)"/>
</dbReference>
<dbReference type="Reactome" id="R-SCE-9837999">
    <property type="pathway name" value="Mitochondrial protein degradation"/>
</dbReference>
<dbReference type="SABIO-RK" id="P00890"/>
<dbReference type="UniPathway" id="UPA00223">
    <property type="reaction ID" value="UER00717"/>
</dbReference>
<dbReference type="BioGRID-ORCS" id="855732">
    <property type="hits" value="0 hits in 10 CRISPR screens"/>
</dbReference>
<dbReference type="PRO" id="PR:P00890"/>
<dbReference type="Proteomes" id="UP000002311">
    <property type="component" value="Chromosome XIV"/>
</dbReference>
<dbReference type="RNAct" id="P00890">
    <property type="molecule type" value="protein"/>
</dbReference>
<dbReference type="GO" id="GO:0005829">
    <property type="term" value="C:cytosol"/>
    <property type="evidence" value="ECO:0000304"/>
    <property type="project" value="Reactome"/>
</dbReference>
<dbReference type="GO" id="GO:0005758">
    <property type="term" value="C:mitochondrial intermembrane space"/>
    <property type="evidence" value="ECO:0000304"/>
    <property type="project" value="Reactome"/>
</dbReference>
<dbReference type="GO" id="GO:0005759">
    <property type="term" value="C:mitochondrial matrix"/>
    <property type="evidence" value="ECO:0000318"/>
    <property type="project" value="GO_Central"/>
</dbReference>
<dbReference type="GO" id="GO:0005739">
    <property type="term" value="C:mitochondrion"/>
    <property type="evidence" value="ECO:0000314"/>
    <property type="project" value="SGD"/>
</dbReference>
<dbReference type="GO" id="GO:0004108">
    <property type="term" value="F:citrate (Si)-synthase activity"/>
    <property type="evidence" value="ECO:0000314"/>
    <property type="project" value="SGD"/>
</dbReference>
<dbReference type="GO" id="GO:0036440">
    <property type="term" value="F:citrate synthase activity"/>
    <property type="evidence" value="ECO:0000315"/>
    <property type="project" value="UniProtKB"/>
</dbReference>
<dbReference type="GO" id="GO:0046356">
    <property type="term" value="P:acetyl-CoA catabolic process"/>
    <property type="evidence" value="ECO:0000314"/>
    <property type="project" value="SGD"/>
</dbReference>
<dbReference type="GO" id="GO:0005975">
    <property type="term" value="P:carbohydrate metabolic process"/>
    <property type="evidence" value="ECO:0000318"/>
    <property type="project" value="GO_Central"/>
</dbReference>
<dbReference type="GO" id="GO:0006101">
    <property type="term" value="P:citrate metabolic process"/>
    <property type="evidence" value="ECO:0000316"/>
    <property type="project" value="SGD"/>
</dbReference>
<dbReference type="GO" id="GO:0006099">
    <property type="term" value="P:tricarboxylic acid cycle"/>
    <property type="evidence" value="ECO:0000318"/>
    <property type="project" value="GO_Central"/>
</dbReference>
<dbReference type="CDD" id="cd06105">
    <property type="entry name" value="ScCit1-2_like"/>
    <property type="match status" value="1"/>
</dbReference>
<dbReference type="FunFam" id="1.10.230.10:FF:000001">
    <property type="entry name" value="Citrate synthase"/>
    <property type="match status" value="1"/>
</dbReference>
<dbReference type="FunFam" id="1.10.580.10:FF:000001">
    <property type="entry name" value="Citrate synthase"/>
    <property type="match status" value="1"/>
</dbReference>
<dbReference type="Gene3D" id="1.10.580.10">
    <property type="entry name" value="Citrate Synthase, domain 1"/>
    <property type="match status" value="1"/>
</dbReference>
<dbReference type="Gene3D" id="1.10.230.10">
    <property type="entry name" value="Cytochrome P450-Terp, domain 2"/>
    <property type="match status" value="1"/>
</dbReference>
<dbReference type="InterPro" id="IPR016142">
    <property type="entry name" value="Citrate_synth-like_lrg_a-sub"/>
</dbReference>
<dbReference type="InterPro" id="IPR016143">
    <property type="entry name" value="Citrate_synth-like_sm_a-sub"/>
</dbReference>
<dbReference type="InterPro" id="IPR002020">
    <property type="entry name" value="Citrate_synthase"/>
</dbReference>
<dbReference type="InterPro" id="IPR019810">
    <property type="entry name" value="Citrate_synthase_AS"/>
</dbReference>
<dbReference type="InterPro" id="IPR010109">
    <property type="entry name" value="Citrate_synthase_euk"/>
</dbReference>
<dbReference type="InterPro" id="IPR036969">
    <property type="entry name" value="Citrate_synthase_sf"/>
</dbReference>
<dbReference type="NCBIfam" id="TIGR01793">
    <property type="entry name" value="cit_synth_euk"/>
    <property type="match status" value="1"/>
</dbReference>
<dbReference type="NCBIfam" id="NF007128">
    <property type="entry name" value="PRK09569.1"/>
    <property type="match status" value="1"/>
</dbReference>
<dbReference type="PANTHER" id="PTHR11739">
    <property type="entry name" value="CITRATE SYNTHASE"/>
    <property type="match status" value="1"/>
</dbReference>
<dbReference type="PANTHER" id="PTHR11739:SF8">
    <property type="entry name" value="CITRATE SYNTHASE, MITOCHONDRIAL"/>
    <property type="match status" value="1"/>
</dbReference>
<dbReference type="Pfam" id="PF00285">
    <property type="entry name" value="Citrate_synt"/>
    <property type="match status" value="1"/>
</dbReference>
<dbReference type="PRINTS" id="PR00143">
    <property type="entry name" value="CITRTSNTHASE"/>
</dbReference>
<dbReference type="SUPFAM" id="SSF48256">
    <property type="entry name" value="Citrate synthase"/>
    <property type="match status" value="1"/>
</dbReference>
<dbReference type="PROSITE" id="PS00480">
    <property type="entry name" value="CITRATE_SYNTHASE"/>
    <property type="match status" value="1"/>
</dbReference>
<proteinExistence type="evidence at protein level"/>
<feature type="transit peptide" description="Mitochondrion">
    <location>
        <begin position="1"/>
        <end position="37"/>
    </location>
</feature>
<feature type="chain" id="PRO_0000005479" description="Citrate synthase, mitochondrial">
    <location>
        <begin position="38"/>
        <end position="479"/>
    </location>
</feature>
<feature type="active site" evidence="1">
    <location>
        <position position="312"/>
    </location>
</feature>
<feature type="active site" evidence="1">
    <location>
        <position position="358"/>
    </location>
</feature>
<feature type="active site" evidence="1">
    <location>
        <position position="413"/>
    </location>
</feature>
<feature type="modified residue" description="Phosphoserine" evidence="4">
    <location>
        <position position="462"/>
    </location>
</feature>
<feature type="mutagenesis site" description="Loss of phosphorylation. Greatly increases catalytic activity and promotes homodimerization." evidence="4">
    <original>S</original>
    <variation>A</variation>
    <location>
        <position position="462"/>
    </location>
</feature>
<feature type="mutagenesis site" description="Phosphomimetic mutant. Inhibits catalytic activity and homodimerization." evidence="4">
    <original>S</original>
    <variation>E</variation>
    <location>
        <position position="462"/>
    </location>
</feature>
<feature type="sequence conflict" description="In Ref. 1; CAA25359." evidence="6" ref="1">
    <original>E</original>
    <variation>Q</variation>
    <location>
        <position position="58"/>
    </location>
</feature>
<feature type="sequence conflict" description="In Ref. 1; CAA25359." evidence="6" ref="1">
    <original>E</original>
    <variation>EE</variation>
    <location>
        <position position="78"/>
    </location>
</feature>
<feature type="helix" evidence="7">
    <location>
        <begin position="45"/>
        <end position="67"/>
    </location>
</feature>
<feature type="strand" evidence="7">
    <location>
        <begin position="70"/>
        <end position="76"/>
    </location>
</feature>
<feature type="helix" evidence="7">
    <location>
        <begin position="77"/>
        <end position="80"/>
    </location>
</feature>
<feature type="turn" evidence="7">
    <location>
        <begin position="81"/>
        <end position="86"/>
    </location>
</feature>
<feature type="strand" evidence="7">
    <location>
        <begin position="88"/>
        <end position="91"/>
    </location>
</feature>
<feature type="strand" evidence="7">
    <location>
        <begin position="94"/>
        <end position="98"/>
    </location>
</feature>
<feature type="turn" evidence="7">
    <location>
        <begin position="99"/>
        <end position="101"/>
    </location>
</feature>
<feature type="strand" evidence="7">
    <location>
        <begin position="102"/>
        <end position="105"/>
    </location>
</feature>
<feature type="helix" evidence="7">
    <location>
        <begin position="110"/>
        <end position="116"/>
    </location>
</feature>
<feature type="helix" evidence="7">
    <location>
        <begin position="128"/>
        <end position="137"/>
    </location>
</feature>
<feature type="helix" evidence="7">
    <location>
        <begin position="143"/>
        <end position="155"/>
    </location>
</feature>
<feature type="helix" evidence="7">
    <location>
        <begin position="161"/>
        <end position="169"/>
    </location>
</feature>
<feature type="helix" evidence="7">
    <location>
        <begin position="176"/>
        <end position="186"/>
    </location>
</feature>
<feature type="helix" evidence="7">
    <location>
        <begin position="187"/>
        <end position="190"/>
    </location>
</feature>
<feature type="helix" evidence="7">
    <location>
        <begin position="192"/>
        <end position="198"/>
    </location>
</feature>
<feature type="helix" evidence="7">
    <location>
        <begin position="203"/>
        <end position="205"/>
    </location>
</feature>
<feature type="helix" evidence="7">
    <location>
        <begin position="206"/>
        <end position="233"/>
    </location>
</feature>
<feature type="helix" evidence="7">
    <location>
        <begin position="247"/>
        <end position="255"/>
    </location>
</feature>
<feature type="helix" evidence="7">
    <location>
        <begin position="260"/>
        <end position="273"/>
    </location>
</feature>
<feature type="helix" evidence="7">
    <location>
        <begin position="281"/>
        <end position="291"/>
    </location>
</feature>
<feature type="helix" evidence="7">
    <location>
        <begin position="296"/>
        <end position="307"/>
    </location>
</feature>
<feature type="turn" evidence="7">
    <location>
        <begin position="310"/>
        <end position="312"/>
    </location>
</feature>
<feature type="helix" evidence="7">
    <location>
        <begin position="315"/>
        <end position="330"/>
    </location>
</feature>
<feature type="helix" evidence="7">
    <location>
        <begin position="336"/>
        <end position="348"/>
    </location>
</feature>
<feature type="helix" evidence="7">
    <location>
        <begin position="366"/>
        <end position="378"/>
    </location>
</feature>
<feature type="helix" evidence="7">
    <location>
        <begin position="383"/>
        <end position="402"/>
    </location>
</feature>
<feature type="helix" evidence="7">
    <location>
        <begin position="412"/>
        <end position="414"/>
    </location>
</feature>
<feature type="helix" evidence="7">
    <location>
        <begin position="416"/>
        <end position="422"/>
    </location>
</feature>
<feature type="helix" evidence="7">
    <location>
        <begin position="428"/>
        <end position="430"/>
    </location>
</feature>
<feature type="helix" evidence="7">
    <location>
        <begin position="431"/>
        <end position="453"/>
    </location>
</feature>
<feature type="strand" evidence="7">
    <location>
        <begin position="461"/>
        <end position="463"/>
    </location>
</feature>
<feature type="helix" evidence="7">
    <location>
        <begin position="465"/>
        <end position="477"/>
    </location>
</feature>